<dbReference type="EC" id="2.7.11.1" evidence="3"/>
<dbReference type="EMBL" id="AC015985">
    <property type="protein sequence ID" value="AAF23252.1"/>
    <property type="molecule type" value="Genomic_DNA"/>
</dbReference>
<dbReference type="EMBL" id="CP002686">
    <property type="protein sequence ID" value="AEE74818.1"/>
    <property type="molecule type" value="Genomic_DNA"/>
</dbReference>
<dbReference type="EMBL" id="CP002686">
    <property type="protein sequence ID" value="AEE74819.1"/>
    <property type="molecule type" value="Genomic_DNA"/>
</dbReference>
<dbReference type="EMBL" id="CP002686">
    <property type="protein sequence ID" value="ANM63951.1"/>
    <property type="molecule type" value="Genomic_DNA"/>
</dbReference>
<dbReference type="EMBL" id="AY091117">
    <property type="protein sequence ID" value="AAM14067.1"/>
    <property type="molecule type" value="mRNA"/>
</dbReference>
<dbReference type="EMBL" id="AY122981">
    <property type="protein sequence ID" value="AAM67514.1"/>
    <property type="molecule type" value="mRNA"/>
</dbReference>
<dbReference type="EMBL" id="AK317246">
    <property type="protein sequence ID" value="BAH19927.1"/>
    <property type="molecule type" value="mRNA"/>
</dbReference>
<dbReference type="RefSeq" id="NP_001326011.1">
    <property type="nucleotide sequence ID" value="NM_001337847.1"/>
</dbReference>
<dbReference type="RefSeq" id="NP_187594.1">
    <property type="nucleotide sequence ID" value="NM_111818.4"/>
</dbReference>
<dbReference type="RefSeq" id="NP_974270.1">
    <property type="nucleotide sequence ID" value="NM_202541.3"/>
</dbReference>
<dbReference type="SMR" id="Q9SF86"/>
<dbReference type="FunCoup" id="Q9SF86">
    <property type="interactions" value="71"/>
</dbReference>
<dbReference type="STRING" id="3702.Q9SF86"/>
<dbReference type="iPTMnet" id="Q9SF86"/>
<dbReference type="PaxDb" id="3702-AT3G09830.1"/>
<dbReference type="ProteomicsDB" id="236372"/>
<dbReference type="EnsemblPlants" id="AT3G09830.1">
    <property type="protein sequence ID" value="AT3G09830.1"/>
    <property type="gene ID" value="AT3G09830"/>
</dbReference>
<dbReference type="EnsemblPlants" id="AT3G09830.2">
    <property type="protein sequence ID" value="AT3G09830.2"/>
    <property type="gene ID" value="AT3G09830"/>
</dbReference>
<dbReference type="EnsemblPlants" id="AT3G09830.3">
    <property type="protein sequence ID" value="AT3G09830.3"/>
    <property type="gene ID" value="AT3G09830"/>
</dbReference>
<dbReference type="GeneID" id="820141"/>
<dbReference type="Gramene" id="AT3G09830.1">
    <property type="protein sequence ID" value="AT3G09830.1"/>
    <property type="gene ID" value="AT3G09830"/>
</dbReference>
<dbReference type="Gramene" id="AT3G09830.2">
    <property type="protein sequence ID" value="AT3G09830.2"/>
    <property type="gene ID" value="AT3G09830"/>
</dbReference>
<dbReference type="Gramene" id="AT3G09830.3">
    <property type="protein sequence ID" value="AT3G09830.3"/>
    <property type="gene ID" value="AT3G09830"/>
</dbReference>
<dbReference type="KEGG" id="ath:AT3G09830"/>
<dbReference type="Araport" id="AT3G09830"/>
<dbReference type="TAIR" id="AT3G09830">
    <property type="gene designation" value="PCRK1"/>
</dbReference>
<dbReference type="eggNOG" id="KOG1187">
    <property type="taxonomic scope" value="Eukaryota"/>
</dbReference>
<dbReference type="HOGENOM" id="CLU_000288_21_13_1"/>
<dbReference type="InParanoid" id="Q9SF86"/>
<dbReference type="OMA" id="EKFIWSW"/>
<dbReference type="OrthoDB" id="4062651at2759"/>
<dbReference type="PhylomeDB" id="Q9SF86"/>
<dbReference type="PRO" id="PR:Q9SF86"/>
<dbReference type="Proteomes" id="UP000006548">
    <property type="component" value="Chromosome 3"/>
</dbReference>
<dbReference type="ExpressionAtlas" id="Q9SF86">
    <property type="expression patterns" value="baseline and differential"/>
</dbReference>
<dbReference type="GO" id="GO:0005829">
    <property type="term" value="C:cytosol"/>
    <property type="evidence" value="ECO:0007005"/>
    <property type="project" value="TAIR"/>
</dbReference>
<dbReference type="GO" id="GO:0005886">
    <property type="term" value="C:plasma membrane"/>
    <property type="evidence" value="ECO:0000314"/>
    <property type="project" value="TAIR"/>
</dbReference>
<dbReference type="GO" id="GO:0005524">
    <property type="term" value="F:ATP binding"/>
    <property type="evidence" value="ECO:0007669"/>
    <property type="project" value="UniProtKB-KW"/>
</dbReference>
<dbReference type="GO" id="GO:0106310">
    <property type="term" value="F:protein serine kinase activity"/>
    <property type="evidence" value="ECO:0007669"/>
    <property type="project" value="RHEA"/>
</dbReference>
<dbReference type="GO" id="GO:0004674">
    <property type="term" value="F:protein serine/threonine kinase activity"/>
    <property type="evidence" value="ECO:0007669"/>
    <property type="project" value="UniProtKB-EC"/>
</dbReference>
<dbReference type="GO" id="GO:0042742">
    <property type="term" value="P:defense response to bacterium"/>
    <property type="evidence" value="ECO:0000315"/>
    <property type="project" value="TAIR"/>
</dbReference>
<dbReference type="GO" id="GO:0002221">
    <property type="term" value="P:pattern recognition receptor signaling pathway"/>
    <property type="evidence" value="ECO:0000315"/>
    <property type="project" value="TAIR"/>
</dbReference>
<dbReference type="GO" id="GO:0080142">
    <property type="term" value="P:regulation of salicylic acid biosynthetic process"/>
    <property type="evidence" value="ECO:0000315"/>
    <property type="project" value="TAIR"/>
</dbReference>
<dbReference type="GO" id="GO:0009617">
    <property type="term" value="P:response to bacterium"/>
    <property type="evidence" value="ECO:0000270"/>
    <property type="project" value="TAIR"/>
</dbReference>
<dbReference type="CDD" id="cd14066">
    <property type="entry name" value="STKc_IRAK"/>
    <property type="match status" value="1"/>
</dbReference>
<dbReference type="FunFam" id="3.30.200.20:FF:000228">
    <property type="entry name" value="Serine/threonine-protein kinase BIK1"/>
    <property type="match status" value="1"/>
</dbReference>
<dbReference type="FunFam" id="1.10.510.10:FF:000715">
    <property type="entry name" value="Serine/threonine-protein kinase PCRK2"/>
    <property type="match status" value="1"/>
</dbReference>
<dbReference type="Gene3D" id="3.30.200.20">
    <property type="entry name" value="Phosphorylase Kinase, domain 1"/>
    <property type="match status" value="1"/>
</dbReference>
<dbReference type="Gene3D" id="1.10.510.10">
    <property type="entry name" value="Transferase(Phosphotransferase) domain 1"/>
    <property type="match status" value="1"/>
</dbReference>
<dbReference type="InterPro" id="IPR011009">
    <property type="entry name" value="Kinase-like_dom_sf"/>
</dbReference>
<dbReference type="InterPro" id="IPR050823">
    <property type="entry name" value="Plant_Ser_Thr_Prot_Kinase"/>
</dbReference>
<dbReference type="InterPro" id="IPR000719">
    <property type="entry name" value="Prot_kinase_dom"/>
</dbReference>
<dbReference type="InterPro" id="IPR017441">
    <property type="entry name" value="Protein_kinase_ATP_BS"/>
</dbReference>
<dbReference type="InterPro" id="IPR001245">
    <property type="entry name" value="Ser-Thr/Tyr_kinase_cat_dom"/>
</dbReference>
<dbReference type="PANTHER" id="PTHR45621">
    <property type="entry name" value="OS01G0588500 PROTEIN-RELATED"/>
    <property type="match status" value="1"/>
</dbReference>
<dbReference type="Pfam" id="PF07714">
    <property type="entry name" value="PK_Tyr_Ser-Thr"/>
    <property type="match status" value="1"/>
</dbReference>
<dbReference type="SUPFAM" id="SSF56112">
    <property type="entry name" value="Protein kinase-like (PK-like)"/>
    <property type="match status" value="1"/>
</dbReference>
<dbReference type="PROSITE" id="PS00107">
    <property type="entry name" value="PROTEIN_KINASE_ATP"/>
    <property type="match status" value="1"/>
</dbReference>
<dbReference type="PROSITE" id="PS50011">
    <property type="entry name" value="PROTEIN_KINASE_DOM"/>
    <property type="match status" value="1"/>
</dbReference>
<feature type="chain" id="PRO_0000442930" description="Serine/threonine-protein kinase PCRK1">
    <location>
        <begin position="1"/>
        <end position="418"/>
    </location>
</feature>
<feature type="domain" description="Protein kinase" evidence="1">
    <location>
        <begin position="84"/>
        <end position="369"/>
    </location>
</feature>
<feature type="region of interest" description="Disordered" evidence="2">
    <location>
        <begin position="36"/>
        <end position="63"/>
    </location>
</feature>
<feature type="active site" description="Proton acceptor" evidence="1">
    <location>
        <position position="218"/>
    </location>
</feature>
<feature type="binding site" evidence="1">
    <location>
        <begin position="90"/>
        <end position="98"/>
    </location>
    <ligand>
        <name>ATP</name>
        <dbReference type="ChEBI" id="CHEBI:30616"/>
    </ligand>
</feature>
<feature type="binding site" evidence="1">
    <location>
        <position position="118"/>
    </location>
    <ligand>
        <name>ATP</name>
        <dbReference type="ChEBI" id="CHEBI:30616"/>
    </ligand>
</feature>
<feature type="modified residue" description="Phosphoserine" evidence="4">
    <location>
        <position position="373"/>
    </location>
</feature>
<feature type="modified residue" description="Phosphoserine" evidence="4">
    <location>
        <position position="377"/>
    </location>
</feature>
<feature type="modified residue" description="Phosphoserine" evidence="4">
    <location>
        <position position="385"/>
    </location>
</feature>
<feature type="mutagenesis site" description="Abolishes kinase activity. Abolishes PCRK1 function in pattern-triggered immunity (PTI)." evidence="3">
    <original>K</original>
    <variation>E</variation>
    <location>
        <position position="118"/>
    </location>
</feature>
<feature type="mutagenesis site" description="Abolishes PCRK1 function in pattern-triggered immunity (PTI); when associated with A-377 and A-385." evidence="4">
    <original>S</original>
    <variation>A</variation>
    <location>
        <position position="373"/>
    </location>
</feature>
<feature type="mutagenesis site" description="No effect on PCRK1 function in pattern-triggered immunity (PTI); when associated with D-377 and D-385." evidence="4">
    <original>S</original>
    <variation>D</variation>
    <location>
        <position position="373"/>
    </location>
</feature>
<feature type="mutagenesis site" description="Abolishes PCRK1 function in pattern-triggered immunity (PTI); when associated with A-373 and A-385." evidence="4">
    <original>S</original>
    <variation>A</variation>
    <location>
        <position position="377"/>
    </location>
</feature>
<feature type="mutagenesis site" description="No effect on PCRK1 function in pattern-triggered immunity (PTI); when associated with D-373 and D-385." evidence="4">
    <original>S</original>
    <variation>D</variation>
    <location>
        <position position="377"/>
    </location>
</feature>
<feature type="mutagenesis site" description="Abolishes PCRK1 function in pattern-triggered immunity (PTI); when associated with A-373 and A-377." evidence="4">
    <original>S</original>
    <variation>A</variation>
    <location>
        <position position="385"/>
    </location>
</feature>
<feature type="mutagenesis site" description="No effect on PCRK1 function in pattern-triggered immunity (PTI); when associated with D-373 and D-377." evidence="4">
    <original>S</original>
    <variation>D</variation>
    <location>
        <position position="385"/>
    </location>
</feature>
<feature type="sequence conflict" description="In Ref. 4; BAH19927." evidence="7" ref="4">
    <original>K</original>
    <variation>E</variation>
    <location>
        <position position="395"/>
    </location>
</feature>
<accession>Q9SF86</accession>
<accession>B9DGR0</accession>
<comment type="function">
    <text evidence="3 4 5">Involved in the activation of early immune responses. Plays a role in pattern-triggered immunity (PTI) induced by pathogen-associated molecular patterns (PAMPs) and damage-associated molecular patterns (DAMPs) (PubMed:25711411). Contributes to PTI in response to the bacterial pathogen Pseudomonas syringae pv maculicola strain ES4326 (PubMed:25711411, PubMed:26237268). Contributes to PTI in response to the bacterial pathogen Pseudomonas syringae pv tomato strain DC3000 (PubMed:25711411). Functions redundantly with PCRK2 in basal resistance against bacterial pathogens and in regulation of plant immunity. Functions together with PCRK2 downstream of the PAMP receptor FLS2. Contributes to the induction of SARD1 and CBP60G, which are transcriptional activator of ICS1, an enzyme involved in salicylate (SA) biosynthesis upon pathogen attack (PubMed:27208222).</text>
</comment>
<comment type="catalytic activity">
    <reaction evidence="3">
        <text>L-seryl-[protein] + ATP = O-phospho-L-seryl-[protein] + ADP + H(+)</text>
        <dbReference type="Rhea" id="RHEA:17989"/>
        <dbReference type="Rhea" id="RHEA-COMP:9863"/>
        <dbReference type="Rhea" id="RHEA-COMP:11604"/>
        <dbReference type="ChEBI" id="CHEBI:15378"/>
        <dbReference type="ChEBI" id="CHEBI:29999"/>
        <dbReference type="ChEBI" id="CHEBI:30616"/>
        <dbReference type="ChEBI" id="CHEBI:83421"/>
        <dbReference type="ChEBI" id="CHEBI:456216"/>
        <dbReference type="EC" id="2.7.11.1"/>
    </reaction>
</comment>
<comment type="catalytic activity">
    <reaction evidence="3">
        <text>L-threonyl-[protein] + ATP = O-phospho-L-threonyl-[protein] + ADP + H(+)</text>
        <dbReference type="Rhea" id="RHEA:46608"/>
        <dbReference type="Rhea" id="RHEA-COMP:11060"/>
        <dbReference type="Rhea" id="RHEA-COMP:11605"/>
        <dbReference type="ChEBI" id="CHEBI:15378"/>
        <dbReference type="ChEBI" id="CHEBI:30013"/>
        <dbReference type="ChEBI" id="CHEBI:30616"/>
        <dbReference type="ChEBI" id="CHEBI:61977"/>
        <dbReference type="ChEBI" id="CHEBI:456216"/>
        <dbReference type="EC" id="2.7.11.1"/>
    </reaction>
</comment>
<comment type="subunit">
    <text evidence="5">Interacts with FLS2.</text>
</comment>
<comment type="subcellular location">
    <subcellularLocation>
        <location evidence="5">Cell membrane</location>
        <topology evidence="8">Peripheral membrane protein</topology>
    </subcellularLocation>
</comment>
<comment type="induction">
    <text evidence="3">Induced by infection with the bacterial pathogen Pseudomonas syringae pv maculicola strain ES4326, but not by microbe-associated molecular patterns (MAMPs) such as flg22.</text>
</comment>
<comment type="disruption phenotype">
    <text evidence="3">No visible phenotype under normal growth conditions, but mutant plants exhibit increased susceptibility to infection with the bacterial pathogens Pseudomonas syringae pv maculicola strain ES4326 and pv tomato strain DC3000.</text>
</comment>
<comment type="similarity">
    <text evidence="7">Belongs to the protein kinase superfamily. Ser/Thr protein kinase family.</text>
</comment>
<sequence length="418" mass="46790">MKCFLFSGGDKRGEQKTPISVSLTSIFSDREINRSGSEFNSRDVSGTSTESSMGRKNSYPPVSTRASNLREFSITDLKSATKNFSRSVMIGEGGFGCVFRGTVRNLEDSSVKIEVAVKQLGKRGLQGHKEWVTEVNFLGIVEHTNLVKLLGYCAEDDERGIQRLLVYEYMPNRSVEFHLSPRSLTVLTWDLRLRIAQDAARGLTYLHEEMEFQIIFRDFKSSNILLDEDWKAKLSDFGLARLGPSEGLTHVSTDVVGTMGYAAPEYIQTGRLTSKSDVWGYGVFLYELITGRRPVDRNRPKGEQKLLEWVRPYLSDTRKFKLILDPRLEGKYPIKSVQKLAVVANRCLVRNSKARPKMSEVLEMVNKIVEASSGNGSPQLVPLNSVKASRDARGKNNGGGGEGGWFGKLWNPKTIRAC</sequence>
<name>PCRK1_ARATH</name>
<keyword id="KW-0067">ATP-binding</keyword>
<keyword id="KW-1003">Cell membrane</keyword>
<keyword id="KW-0418">Kinase</keyword>
<keyword id="KW-0472">Membrane</keyword>
<keyword id="KW-0547">Nucleotide-binding</keyword>
<keyword id="KW-0597">Phosphoprotein</keyword>
<keyword id="KW-0611">Plant defense</keyword>
<keyword id="KW-1185">Reference proteome</keyword>
<keyword id="KW-0808">Transferase</keyword>
<organism>
    <name type="scientific">Arabidopsis thaliana</name>
    <name type="common">Mouse-ear cress</name>
    <dbReference type="NCBI Taxonomy" id="3702"/>
    <lineage>
        <taxon>Eukaryota</taxon>
        <taxon>Viridiplantae</taxon>
        <taxon>Streptophyta</taxon>
        <taxon>Embryophyta</taxon>
        <taxon>Tracheophyta</taxon>
        <taxon>Spermatophyta</taxon>
        <taxon>Magnoliopsida</taxon>
        <taxon>eudicotyledons</taxon>
        <taxon>Gunneridae</taxon>
        <taxon>Pentapetalae</taxon>
        <taxon>rosids</taxon>
        <taxon>malvids</taxon>
        <taxon>Brassicales</taxon>
        <taxon>Brassicaceae</taxon>
        <taxon>Camelineae</taxon>
        <taxon>Arabidopsis</taxon>
    </lineage>
</organism>
<gene>
    <name evidence="6" type="primary">PCRK1</name>
    <name evidence="9" type="ordered locus">At3g09830</name>
    <name evidence="10" type="ORF">F8A24.12</name>
</gene>
<reference key="1">
    <citation type="journal article" date="2000" name="Nature">
        <title>Sequence and analysis of chromosome 3 of the plant Arabidopsis thaliana.</title>
        <authorList>
            <person name="Salanoubat M."/>
            <person name="Lemcke K."/>
            <person name="Rieger M."/>
            <person name="Ansorge W."/>
            <person name="Unseld M."/>
            <person name="Fartmann B."/>
            <person name="Valle G."/>
            <person name="Bloecker H."/>
            <person name="Perez-Alonso M."/>
            <person name="Obermaier B."/>
            <person name="Delseny M."/>
            <person name="Boutry M."/>
            <person name="Grivell L.A."/>
            <person name="Mache R."/>
            <person name="Puigdomenech P."/>
            <person name="De Simone V."/>
            <person name="Choisne N."/>
            <person name="Artiguenave F."/>
            <person name="Robert C."/>
            <person name="Brottier P."/>
            <person name="Wincker P."/>
            <person name="Cattolico L."/>
            <person name="Weissenbach J."/>
            <person name="Saurin W."/>
            <person name="Quetier F."/>
            <person name="Schaefer M."/>
            <person name="Mueller-Auer S."/>
            <person name="Gabel C."/>
            <person name="Fuchs M."/>
            <person name="Benes V."/>
            <person name="Wurmbach E."/>
            <person name="Drzonek H."/>
            <person name="Erfle H."/>
            <person name="Jordan N."/>
            <person name="Bangert S."/>
            <person name="Wiedelmann R."/>
            <person name="Kranz H."/>
            <person name="Voss H."/>
            <person name="Holland R."/>
            <person name="Brandt P."/>
            <person name="Nyakatura G."/>
            <person name="Vezzi A."/>
            <person name="D'Angelo M."/>
            <person name="Pallavicini A."/>
            <person name="Toppo S."/>
            <person name="Simionati B."/>
            <person name="Conrad A."/>
            <person name="Hornischer K."/>
            <person name="Kauer G."/>
            <person name="Loehnert T.-H."/>
            <person name="Nordsiek G."/>
            <person name="Reichelt J."/>
            <person name="Scharfe M."/>
            <person name="Schoen O."/>
            <person name="Bargues M."/>
            <person name="Terol J."/>
            <person name="Climent J."/>
            <person name="Navarro P."/>
            <person name="Collado C."/>
            <person name="Perez-Perez A."/>
            <person name="Ottenwaelder B."/>
            <person name="Duchemin D."/>
            <person name="Cooke R."/>
            <person name="Laudie M."/>
            <person name="Berger-Llauro C."/>
            <person name="Purnelle B."/>
            <person name="Masuy D."/>
            <person name="de Haan M."/>
            <person name="Maarse A.C."/>
            <person name="Alcaraz J.-P."/>
            <person name="Cottet A."/>
            <person name="Casacuberta E."/>
            <person name="Monfort A."/>
            <person name="Argiriou A."/>
            <person name="Flores M."/>
            <person name="Liguori R."/>
            <person name="Vitale D."/>
            <person name="Mannhaupt G."/>
            <person name="Haase D."/>
            <person name="Schoof H."/>
            <person name="Rudd S."/>
            <person name="Zaccaria P."/>
            <person name="Mewes H.-W."/>
            <person name="Mayer K.F.X."/>
            <person name="Kaul S."/>
            <person name="Town C.D."/>
            <person name="Koo H.L."/>
            <person name="Tallon L.J."/>
            <person name="Jenkins J."/>
            <person name="Rooney T."/>
            <person name="Rizzo M."/>
            <person name="Walts A."/>
            <person name="Utterback T."/>
            <person name="Fujii C.Y."/>
            <person name="Shea T.P."/>
            <person name="Creasy T.H."/>
            <person name="Haas B."/>
            <person name="Maiti R."/>
            <person name="Wu D."/>
            <person name="Peterson J."/>
            <person name="Van Aken S."/>
            <person name="Pai G."/>
            <person name="Militscher J."/>
            <person name="Sellers P."/>
            <person name="Gill J.E."/>
            <person name="Feldblyum T.V."/>
            <person name="Preuss D."/>
            <person name="Lin X."/>
            <person name="Nierman W.C."/>
            <person name="Salzberg S.L."/>
            <person name="White O."/>
            <person name="Venter J.C."/>
            <person name="Fraser C.M."/>
            <person name="Kaneko T."/>
            <person name="Nakamura Y."/>
            <person name="Sato S."/>
            <person name="Kato T."/>
            <person name="Asamizu E."/>
            <person name="Sasamoto S."/>
            <person name="Kimura T."/>
            <person name="Idesawa K."/>
            <person name="Kawashima K."/>
            <person name="Kishida Y."/>
            <person name="Kiyokawa C."/>
            <person name="Kohara M."/>
            <person name="Matsumoto M."/>
            <person name="Matsuno A."/>
            <person name="Muraki A."/>
            <person name="Nakayama S."/>
            <person name="Nakazaki N."/>
            <person name="Shinpo S."/>
            <person name="Takeuchi C."/>
            <person name="Wada T."/>
            <person name="Watanabe A."/>
            <person name="Yamada M."/>
            <person name="Yasuda M."/>
            <person name="Tabata S."/>
        </authorList>
    </citation>
    <scope>NUCLEOTIDE SEQUENCE [LARGE SCALE GENOMIC DNA]</scope>
    <source>
        <strain>cv. Columbia</strain>
    </source>
</reference>
<reference key="2">
    <citation type="journal article" date="2017" name="Plant J.">
        <title>Araport11: a complete reannotation of the Arabidopsis thaliana reference genome.</title>
        <authorList>
            <person name="Cheng C.Y."/>
            <person name="Krishnakumar V."/>
            <person name="Chan A.P."/>
            <person name="Thibaud-Nissen F."/>
            <person name="Schobel S."/>
            <person name="Town C.D."/>
        </authorList>
    </citation>
    <scope>GENOME REANNOTATION</scope>
    <source>
        <strain>cv. Columbia</strain>
    </source>
</reference>
<reference key="3">
    <citation type="journal article" date="2003" name="Science">
        <title>Empirical analysis of transcriptional activity in the Arabidopsis genome.</title>
        <authorList>
            <person name="Yamada K."/>
            <person name="Lim J."/>
            <person name="Dale J.M."/>
            <person name="Chen H."/>
            <person name="Shinn P."/>
            <person name="Palm C.J."/>
            <person name="Southwick A.M."/>
            <person name="Wu H.C."/>
            <person name="Kim C.J."/>
            <person name="Nguyen M."/>
            <person name="Pham P.K."/>
            <person name="Cheuk R.F."/>
            <person name="Karlin-Newmann G."/>
            <person name="Liu S.X."/>
            <person name="Lam B."/>
            <person name="Sakano H."/>
            <person name="Wu T."/>
            <person name="Yu G."/>
            <person name="Miranda M."/>
            <person name="Quach H.L."/>
            <person name="Tripp M."/>
            <person name="Chang C.H."/>
            <person name="Lee J.M."/>
            <person name="Toriumi M.J."/>
            <person name="Chan M.M."/>
            <person name="Tang C.C."/>
            <person name="Onodera C.S."/>
            <person name="Deng J.M."/>
            <person name="Akiyama K."/>
            <person name="Ansari Y."/>
            <person name="Arakawa T."/>
            <person name="Banh J."/>
            <person name="Banno F."/>
            <person name="Bowser L."/>
            <person name="Brooks S.Y."/>
            <person name="Carninci P."/>
            <person name="Chao Q."/>
            <person name="Choy N."/>
            <person name="Enju A."/>
            <person name="Goldsmith A.D."/>
            <person name="Gurjal M."/>
            <person name="Hansen N.F."/>
            <person name="Hayashizaki Y."/>
            <person name="Johnson-Hopson C."/>
            <person name="Hsuan V.W."/>
            <person name="Iida K."/>
            <person name="Karnes M."/>
            <person name="Khan S."/>
            <person name="Koesema E."/>
            <person name="Ishida J."/>
            <person name="Jiang P.X."/>
            <person name="Jones T."/>
            <person name="Kawai J."/>
            <person name="Kamiya A."/>
            <person name="Meyers C."/>
            <person name="Nakajima M."/>
            <person name="Narusaka M."/>
            <person name="Seki M."/>
            <person name="Sakurai T."/>
            <person name="Satou M."/>
            <person name="Tamse R."/>
            <person name="Vaysberg M."/>
            <person name="Wallender E.K."/>
            <person name="Wong C."/>
            <person name="Yamamura Y."/>
            <person name="Yuan S."/>
            <person name="Shinozaki K."/>
            <person name="Davis R.W."/>
            <person name="Theologis A."/>
            <person name="Ecker J.R."/>
        </authorList>
    </citation>
    <scope>NUCLEOTIDE SEQUENCE [LARGE SCALE MRNA]</scope>
    <source>
        <strain>cv. Columbia</strain>
    </source>
</reference>
<reference key="4">
    <citation type="journal article" date="2009" name="DNA Res.">
        <title>Analysis of multiple occurrences of alternative splicing events in Arabidopsis thaliana using novel sequenced full-length cDNAs.</title>
        <authorList>
            <person name="Iida K."/>
            <person name="Fukami-Kobayashi K."/>
            <person name="Toyoda A."/>
            <person name="Sakaki Y."/>
            <person name="Kobayashi M."/>
            <person name="Seki M."/>
            <person name="Shinozaki K."/>
        </authorList>
    </citation>
    <scope>NUCLEOTIDE SEQUENCE [LARGE SCALE MRNA]</scope>
    <source>
        <strain>cv. Columbia</strain>
    </source>
</reference>
<reference key="5">
    <citation type="journal article" date="2015" name="New Phytol.">
        <title>The receptor-like cytoplasmic kinase PCRK1 contributes to pattern-triggered immunity against Pseudomonas syringae in Arabidopsis thaliana.</title>
        <authorList>
            <person name="Sreekanta S."/>
            <person name="Bethke G."/>
            <person name="Hatsugai N."/>
            <person name="Tsuda K."/>
            <person name="Thao A."/>
            <person name="Wang L."/>
            <person name="Katagiri F."/>
            <person name="Glazebrook J."/>
        </authorList>
    </citation>
    <scope>FUNCTION</scope>
    <scope>CATALYTIC ACTIVITY</scope>
    <scope>INDUCTION BY BACTERIAL INFECTION</scope>
    <scope>MUTAGENESIS OF LYS-118</scope>
    <scope>DISRUPTION PHENOTYPE</scope>
</reference>
<reference key="6">
    <citation type="journal article" date="2015" name="Plant Signal. Behav.">
        <title>Functional characterization of PCRK1, a putative protein kinase with a role in immunity.</title>
        <authorList>
            <person name="Sreekanta S."/>
            <person name="Haruta M."/>
            <person name="Minkoff B.B."/>
            <person name="Glazebrook J."/>
        </authorList>
    </citation>
    <scope>FUNCTION</scope>
    <scope>PHOSPHORYLATION AT SER-373; SER-377 AND SER-385</scope>
    <scope>MUTAGENESIS OF SER-373; SER-377 AND SER-385</scope>
</reference>
<reference key="7">
    <citation type="journal article" date="2016" name="Plant Physiol.">
        <title>Two redundant receptor-like cytoplasmic kinases function downstream of pattern recognition receptors to regulate activation of SA biosynthesis.</title>
        <authorList>
            <person name="Kong Q."/>
            <person name="Sun T."/>
            <person name="Qu N."/>
            <person name="Ma J."/>
            <person name="Li M."/>
            <person name="Cheng Y.T."/>
            <person name="Zhang Q."/>
            <person name="Wu D."/>
            <person name="Zhang Z."/>
            <person name="Zhang Y."/>
        </authorList>
    </citation>
    <scope>FUNCTION</scope>
    <scope>INTERACTION WITH FLS2</scope>
    <scope>SUBCELLULAR LOCATION</scope>
</reference>
<protein>
    <recommendedName>
        <fullName evidence="7">Serine/threonine-protein kinase PCRK1</fullName>
        <ecNumber evidence="3">2.7.11.1</ecNumber>
    </recommendedName>
    <alternativeName>
        <fullName evidence="6">Protein PTI-COMPROMISED RECEPTOR-LIKE CYTOPLASMIC KINASE 1</fullName>
    </alternativeName>
</protein>
<evidence type="ECO:0000255" key="1">
    <source>
        <dbReference type="PROSITE-ProRule" id="PRU00159"/>
    </source>
</evidence>
<evidence type="ECO:0000256" key="2">
    <source>
        <dbReference type="SAM" id="MobiDB-lite"/>
    </source>
</evidence>
<evidence type="ECO:0000269" key="3">
    <source>
    </source>
</evidence>
<evidence type="ECO:0000269" key="4">
    <source>
    </source>
</evidence>
<evidence type="ECO:0000269" key="5">
    <source>
    </source>
</evidence>
<evidence type="ECO:0000303" key="6">
    <source>
    </source>
</evidence>
<evidence type="ECO:0000305" key="7"/>
<evidence type="ECO:0000305" key="8">
    <source>
    </source>
</evidence>
<evidence type="ECO:0000312" key="9">
    <source>
        <dbReference type="Araport" id="AT3G09830"/>
    </source>
</evidence>
<evidence type="ECO:0000312" key="10">
    <source>
        <dbReference type="EMBL" id="AAF23252.1"/>
    </source>
</evidence>
<proteinExistence type="evidence at protein level"/>